<feature type="chain" id="PRO_1000019778" description="Serine--tRNA ligase">
    <location>
        <begin position="1"/>
        <end position="426"/>
    </location>
</feature>
<feature type="binding site" evidence="1">
    <location>
        <begin position="233"/>
        <end position="235"/>
    </location>
    <ligand>
        <name>L-serine</name>
        <dbReference type="ChEBI" id="CHEBI:33384"/>
    </ligand>
</feature>
<feature type="binding site" evidence="1">
    <location>
        <begin position="264"/>
        <end position="266"/>
    </location>
    <ligand>
        <name>ATP</name>
        <dbReference type="ChEBI" id="CHEBI:30616"/>
    </ligand>
</feature>
<feature type="binding site" evidence="1">
    <location>
        <position position="287"/>
    </location>
    <ligand>
        <name>L-serine</name>
        <dbReference type="ChEBI" id="CHEBI:33384"/>
    </ligand>
</feature>
<feature type="binding site" evidence="1">
    <location>
        <begin position="351"/>
        <end position="354"/>
    </location>
    <ligand>
        <name>ATP</name>
        <dbReference type="ChEBI" id="CHEBI:30616"/>
    </ligand>
</feature>
<feature type="binding site" evidence="1">
    <location>
        <position position="387"/>
    </location>
    <ligand>
        <name>L-serine</name>
        <dbReference type="ChEBI" id="CHEBI:33384"/>
    </ligand>
</feature>
<name>SYS_PSEP1</name>
<proteinExistence type="inferred from homology"/>
<comment type="function">
    <text evidence="1">Catalyzes the attachment of serine to tRNA(Ser). Is also able to aminoacylate tRNA(Sec) with serine, to form the misacylated tRNA L-seryl-tRNA(Sec), which will be further converted into selenocysteinyl-tRNA(Sec).</text>
</comment>
<comment type="catalytic activity">
    <reaction evidence="1">
        <text>tRNA(Ser) + L-serine + ATP = L-seryl-tRNA(Ser) + AMP + diphosphate + H(+)</text>
        <dbReference type="Rhea" id="RHEA:12292"/>
        <dbReference type="Rhea" id="RHEA-COMP:9669"/>
        <dbReference type="Rhea" id="RHEA-COMP:9703"/>
        <dbReference type="ChEBI" id="CHEBI:15378"/>
        <dbReference type="ChEBI" id="CHEBI:30616"/>
        <dbReference type="ChEBI" id="CHEBI:33019"/>
        <dbReference type="ChEBI" id="CHEBI:33384"/>
        <dbReference type="ChEBI" id="CHEBI:78442"/>
        <dbReference type="ChEBI" id="CHEBI:78533"/>
        <dbReference type="ChEBI" id="CHEBI:456215"/>
        <dbReference type="EC" id="6.1.1.11"/>
    </reaction>
</comment>
<comment type="catalytic activity">
    <reaction evidence="1">
        <text>tRNA(Sec) + L-serine + ATP = L-seryl-tRNA(Sec) + AMP + diphosphate + H(+)</text>
        <dbReference type="Rhea" id="RHEA:42580"/>
        <dbReference type="Rhea" id="RHEA-COMP:9742"/>
        <dbReference type="Rhea" id="RHEA-COMP:10128"/>
        <dbReference type="ChEBI" id="CHEBI:15378"/>
        <dbReference type="ChEBI" id="CHEBI:30616"/>
        <dbReference type="ChEBI" id="CHEBI:33019"/>
        <dbReference type="ChEBI" id="CHEBI:33384"/>
        <dbReference type="ChEBI" id="CHEBI:78442"/>
        <dbReference type="ChEBI" id="CHEBI:78533"/>
        <dbReference type="ChEBI" id="CHEBI:456215"/>
        <dbReference type="EC" id="6.1.1.11"/>
    </reaction>
</comment>
<comment type="pathway">
    <text evidence="1">Aminoacyl-tRNA biosynthesis; selenocysteinyl-tRNA(Sec) biosynthesis; L-seryl-tRNA(Sec) from L-serine and tRNA(Sec): step 1/1.</text>
</comment>
<comment type="subunit">
    <text evidence="1">Homodimer. The tRNA molecule binds across the dimer.</text>
</comment>
<comment type="subcellular location">
    <subcellularLocation>
        <location evidence="1">Cytoplasm</location>
    </subcellularLocation>
</comment>
<comment type="domain">
    <text evidence="1">Consists of two distinct domains, a catalytic core and a N-terminal extension that is involved in tRNA binding.</text>
</comment>
<comment type="similarity">
    <text evidence="1">Belongs to the class-II aminoacyl-tRNA synthetase family. Type-1 seryl-tRNA synthetase subfamily.</text>
</comment>
<evidence type="ECO:0000255" key="1">
    <source>
        <dbReference type="HAMAP-Rule" id="MF_00176"/>
    </source>
</evidence>
<protein>
    <recommendedName>
        <fullName evidence="1">Serine--tRNA ligase</fullName>
        <ecNumber evidence="1">6.1.1.11</ecNumber>
    </recommendedName>
    <alternativeName>
        <fullName evidence="1">Seryl-tRNA synthetase</fullName>
        <shortName evidence="1">SerRS</shortName>
    </alternativeName>
    <alternativeName>
        <fullName evidence="1">Seryl-tRNA(Ser/Sec) synthetase</fullName>
    </alternativeName>
</protein>
<dbReference type="EC" id="6.1.1.11" evidence="1"/>
<dbReference type="EMBL" id="CP000712">
    <property type="protein sequence ID" value="ABQ77986.1"/>
    <property type="molecule type" value="Genomic_DNA"/>
</dbReference>
<dbReference type="SMR" id="A5W1H6"/>
<dbReference type="KEGG" id="ppf:Pput_1833"/>
<dbReference type="eggNOG" id="COG0172">
    <property type="taxonomic scope" value="Bacteria"/>
</dbReference>
<dbReference type="HOGENOM" id="CLU_023797_1_1_6"/>
<dbReference type="UniPathway" id="UPA00906">
    <property type="reaction ID" value="UER00895"/>
</dbReference>
<dbReference type="GO" id="GO:0005737">
    <property type="term" value="C:cytoplasm"/>
    <property type="evidence" value="ECO:0007669"/>
    <property type="project" value="UniProtKB-SubCell"/>
</dbReference>
<dbReference type="GO" id="GO:0005524">
    <property type="term" value="F:ATP binding"/>
    <property type="evidence" value="ECO:0007669"/>
    <property type="project" value="UniProtKB-UniRule"/>
</dbReference>
<dbReference type="GO" id="GO:0004828">
    <property type="term" value="F:serine-tRNA ligase activity"/>
    <property type="evidence" value="ECO:0007669"/>
    <property type="project" value="UniProtKB-UniRule"/>
</dbReference>
<dbReference type="GO" id="GO:0016260">
    <property type="term" value="P:selenocysteine biosynthetic process"/>
    <property type="evidence" value="ECO:0007669"/>
    <property type="project" value="UniProtKB-UniRule"/>
</dbReference>
<dbReference type="GO" id="GO:0006434">
    <property type="term" value="P:seryl-tRNA aminoacylation"/>
    <property type="evidence" value="ECO:0007669"/>
    <property type="project" value="UniProtKB-UniRule"/>
</dbReference>
<dbReference type="CDD" id="cd00770">
    <property type="entry name" value="SerRS_core"/>
    <property type="match status" value="1"/>
</dbReference>
<dbReference type="Gene3D" id="3.30.930.10">
    <property type="entry name" value="Bira Bifunctional Protein, Domain 2"/>
    <property type="match status" value="1"/>
</dbReference>
<dbReference type="Gene3D" id="1.10.287.40">
    <property type="entry name" value="Serine-tRNA synthetase, tRNA binding domain"/>
    <property type="match status" value="1"/>
</dbReference>
<dbReference type="HAMAP" id="MF_00176">
    <property type="entry name" value="Ser_tRNA_synth_type1"/>
    <property type="match status" value="1"/>
</dbReference>
<dbReference type="InterPro" id="IPR002314">
    <property type="entry name" value="aa-tRNA-synt_IIb"/>
</dbReference>
<dbReference type="InterPro" id="IPR006195">
    <property type="entry name" value="aa-tRNA-synth_II"/>
</dbReference>
<dbReference type="InterPro" id="IPR045864">
    <property type="entry name" value="aa-tRNA-synth_II/BPL/LPL"/>
</dbReference>
<dbReference type="InterPro" id="IPR002317">
    <property type="entry name" value="Ser-tRNA-ligase_type_1"/>
</dbReference>
<dbReference type="InterPro" id="IPR015866">
    <property type="entry name" value="Ser-tRNA-synth_1_N"/>
</dbReference>
<dbReference type="InterPro" id="IPR042103">
    <property type="entry name" value="SerRS_1_N_sf"/>
</dbReference>
<dbReference type="InterPro" id="IPR033729">
    <property type="entry name" value="SerRS_core"/>
</dbReference>
<dbReference type="InterPro" id="IPR010978">
    <property type="entry name" value="tRNA-bd_arm"/>
</dbReference>
<dbReference type="NCBIfam" id="TIGR00414">
    <property type="entry name" value="serS"/>
    <property type="match status" value="1"/>
</dbReference>
<dbReference type="PANTHER" id="PTHR43697:SF1">
    <property type="entry name" value="SERINE--TRNA LIGASE"/>
    <property type="match status" value="1"/>
</dbReference>
<dbReference type="PANTHER" id="PTHR43697">
    <property type="entry name" value="SERYL-TRNA SYNTHETASE"/>
    <property type="match status" value="1"/>
</dbReference>
<dbReference type="Pfam" id="PF02403">
    <property type="entry name" value="Seryl_tRNA_N"/>
    <property type="match status" value="1"/>
</dbReference>
<dbReference type="Pfam" id="PF00587">
    <property type="entry name" value="tRNA-synt_2b"/>
    <property type="match status" value="1"/>
</dbReference>
<dbReference type="PIRSF" id="PIRSF001529">
    <property type="entry name" value="Ser-tRNA-synth_IIa"/>
    <property type="match status" value="1"/>
</dbReference>
<dbReference type="PRINTS" id="PR00981">
    <property type="entry name" value="TRNASYNTHSER"/>
</dbReference>
<dbReference type="SUPFAM" id="SSF55681">
    <property type="entry name" value="Class II aaRS and biotin synthetases"/>
    <property type="match status" value="1"/>
</dbReference>
<dbReference type="SUPFAM" id="SSF46589">
    <property type="entry name" value="tRNA-binding arm"/>
    <property type="match status" value="1"/>
</dbReference>
<dbReference type="PROSITE" id="PS50862">
    <property type="entry name" value="AA_TRNA_LIGASE_II"/>
    <property type="match status" value="1"/>
</dbReference>
<keyword id="KW-0030">Aminoacyl-tRNA synthetase</keyword>
<keyword id="KW-0067">ATP-binding</keyword>
<keyword id="KW-0963">Cytoplasm</keyword>
<keyword id="KW-0436">Ligase</keyword>
<keyword id="KW-0547">Nucleotide-binding</keyword>
<keyword id="KW-0648">Protein biosynthesis</keyword>
<accession>A5W1H6</accession>
<gene>
    <name evidence="1" type="primary">serS</name>
    <name type="ordered locus">Pput_1833</name>
</gene>
<organism>
    <name type="scientific">Pseudomonas putida (strain ATCC 700007 / DSM 6899 / JCM 31910 / BCRC 17059 / LMG 24140 / F1)</name>
    <dbReference type="NCBI Taxonomy" id="351746"/>
    <lineage>
        <taxon>Bacteria</taxon>
        <taxon>Pseudomonadati</taxon>
        <taxon>Pseudomonadota</taxon>
        <taxon>Gammaproteobacteria</taxon>
        <taxon>Pseudomonadales</taxon>
        <taxon>Pseudomonadaceae</taxon>
        <taxon>Pseudomonas</taxon>
    </lineage>
</organism>
<reference key="1">
    <citation type="submission" date="2007-05" db="EMBL/GenBank/DDBJ databases">
        <title>Complete sequence of Pseudomonas putida F1.</title>
        <authorList>
            <consortium name="US DOE Joint Genome Institute"/>
            <person name="Copeland A."/>
            <person name="Lucas S."/>
            <person name="Lapidus A."/>
            <person name="Barry K."/>
            <person name="Detter J.C."/>
            <person name="Glavina del Rio T."/>
            <person name="Hammon N."/>
            <person name="Israni S."/>
            <person name="Dalin E."/>
            <person name="Tice H."/>
            <person name="Pitluck S."/>
            <person name="Chain P."/>
            <person name="Malfatti S."/>
            <person name="Shin M."/>
            <person name="Vergez L."/>
            <person name="Schmutz J."/>
            <person name="Larimer F."/>
            <person name="Land M."/>
            <person name="Hauser L."/>
            <person name="Kyrpides N."/>
            <person name="Lykidis A."/>
            <person name="Parales R."/>
            <person name="Richardson P."/>
        </authorList>
    </citation>
    <scope>NUCLEOTIDE SEQUENCE [LARGE SCALE GENOMIC DNA]</scope>
    <source>
        <strain>ATCC 700007 / DSM 6899 / JCM 31910 / BCRC 17059 / LMG 24140 / F1</strain>
    </source>
</reference>
<sequence>MLDSKLLRGQLQEVADRLASRGFSLDVARIESLEERRKAVQTRTEQLQAERNARSKSIGQAKAKGEDIAPLMADVERMANELAAGKAELDAIQAELDSILLTIPNLPDASVPVGASEDDNVEVRRWGTPKAFDFEIKDHVALGEISRGLDFEAAAKLSGARFAVLRGPVARLHRALAQFMINLHTGEHGYEEHYTPYMVQAPALQGTGQLPKFEEDLFKITREGEADFYLIPTAEVSLTNLVAGEILDAKQLPLKLVAHTPCFRSEAGASGRDTRGMIRQHQFDKVEMVQVVEPSKSMEALEGLTANAERVLQLLELPYRVLALCTGDMGFGAVKTYDLEVWVPSQDKYREISSCSNCGDFQARRMQARWRNPETGKPELVHTLNGSGLAVGRTLVAVLENYQQADGSILVPEVLKPYMGGVEVIR</sequence>